<dbReference type="EC" id="5.4.2.11" evidence="3"/>
<dbReference type="EC" id="5.4.2.4" evidence="3"/>
<dbReference type="EMBL" id="M31835">
    <property type="protein sequence ID" value="AAA41835.1"/>
    <property type="molecule type" value="mRNA"/>
</dbReference>
<dbReference type="EMBL" id="Z17319">
    <property type="protein sequence ID" value="CAA78967.1"/>
    <property type="molecule type" value="Genomic_DNA"/>
</dbReference>
<dbReference type="PIR" id="A33793">
    <property type="entry name" value="PMRTYM"/>
</dbReference>
<dbReference type="RefSeq" id="NP_059024.1">
    <property type="nucleotide sequence ID" value="NM_017328.3"/>
</dbReference>
<dbReference type="SMR" id="P16290"/>
<dbReference type="BioGRID" id="247059">
    <property type="interactions" value="1"/>
</dbReference>
<dbReference type="FunCoup" id="P16290">
    <property type="interactions" value="696"/>
</dbReference>
<dbReference type="IntAct" id="P16290">
    <property type="interactions" value="8"/>
</dbReference>
<dbReference type="MINT" id="P16290"/>
<dbReference type="STRING" id="10116.ENSRNOP00000018227"/>
<dbReference type="GlyGen" id="P16290">
    <property type="glycosylation" value="1 site, 1 O-linked glycan (1 site)"/>
</dbReference>
<dbReference type="iPTMnet" id="P16290"/>
<dbReference type="PhosphoSitePlus" id="P16290"/>
<dbReference type="jPOST" id="P16290"/>
<dbReference type="PaxDb" id="10116-ENSRNOP00000018227"/>
<dbReference type="Ensembl" id="ENSRNOT00000018227.8">
    <property type="protein sequence ID" value="ENSRNOP00000018227.4"/>
    <property type="gene ID" value="ENSRNOG00000013532.8"/>
</dbReference>
<dbReference type="GeneID" id="24959"/>
<dbReference type="KEGG" id="rno:24959"/>
<dbReference type="UCSC" id="RGD:3313">
    <property type="organism name" value="rat"/>
</dbReference>
<dbReference type="AGR" id="RGD:3313"/>
<dbReference type="CTD" id="5224"/>
<dbReference type="RGD" id="3313">
    <property type="gene designation" value="Pgam2"/>
</dbReference>
<dbReference type="eggNOG" id="KOG0235">
    <property type="taxonomic scope" value="Eukaryota"/>
</dbReference>
<dbReference type="GeneTree" id="ENSGT00950000182926"/>
<dbReference type="HOGENOM" id="CLU_033323_1_1_1"/>
<dbReference type="InParanoid" id="P16290"/>
<dbReference type="OMA" id="MDDKHPY"/>
<dbReference type="OrthoDB" id="354304at2759"/>
<dbReference type="PhylomeDB" id="P16290"/>
<dbReference type="TreeFam" id="TF300007"/>
<dbReference type="Reactome" id="R-RNO-70171">
    <property type="pathway name" value="Glycolysis"/>
</dbReference>
<dbReference type="Reactome" id="R-RNO-70263">
    <property type="pathway name" value="Gluconeogenesis"/>
</dbReference>
<dbReference type="SABIO-RK" id="P16290"/>
<dbReference type="PRO" id="PR:P16290"/>
<dbReference type="Proteomes" id="UP000002494">
    <property type="component" value="Chromosome 14"/>
</dbReference>
<dbReference type="Bgee" id="ENSRNOG00000013532">
    <property type="expression patterns" value="Expressed in skeletal muscle tissue and 19 other cell types or tissues"/>
</dbReference>
<dbReference type="GO" id="GO:0005829">
    <property type="term" value="C:cytosol"/>
    <property type="evidence" value="ECO:0000266"/>
    <property type="project" value="RGD"/>
</dbReference>
<dbReference type="GO" id="GO:0004082">
    <property type="term" value="F:bisphosphoglycerate mutase activity"/>
    <property type="evidence" value="ECO:0007669"/>
    <property type="project" value="UniProtKB-EC"/>
</dbReference>
<dbReference type="GO" id="GO:0016787">
    <property type="term" value="F:hydrolase activity"/>
    <property type="evidence" value="ECO:0007669"/>
    <property type="project" value="UniProtKB-KW"/>
</dbReference>
<dbReference type="GO" id="GO:0042802">
    <property type="term" value="F:identical protein binding"/>
    <property type="evidence" value="ECO:0000266"/>
    <property type="project" value="RGD"/>
</dbReference>
<dbReference type="GO" id="GO:0004619">
    <property type="term" value="F:phosphoglycerate mutase activity"/>
    <property type="evidence" value="ECO:0000314"/>
    <property type="project" value="RGD"/>
</dbReference>
<dbReference type="GO" id="GO:0061621">
    <property type="term" value="P:canonical glycolysis"/>
    <property type="evidence" value="ECO:0000266"/>
    <property type="project" value="RGD"/>
</dbReference>
<dbReference type="GO" id="GO:0006094">
    <property type="term" value="P:gluconeogenesis"/>
    <property type="evidence" value="ECO:0000314"/>
    <property type="project" value="RGD"/>
</dbReference>
<dbReference type="GO" id="GO:0006096">
    <property type="term" value="P:glycolytic process"/>
    <property type="evidence" value="ECO:0000266"/>
    <property type="project" value="RGD"/>
</dbReference>
<dbReference type="GO" id="GO:0007219">
    <property type="term" value="P:Notch signaling pathway"/>
    <property type="evidence" value="ECO:0000266"/>
    <property type="project" value="RGD"/>
</dbReference>
<dbReference type="GO" id="GO:0046689">
    <property type="term" value="P:response to mercury ion"/>
    <property type="evidence" value="ECO:0000315"/>
    <property type="project" value="RGD"/>
</dbReference>
<dbReference type="GO" id="GO:0007283">
    <property type="term" value="P:spermatogenesis"/>
    <property type="evidence" value="ECO:0000270"/>
    <property type="project" value="RGD"/>
</dbReference>
<dbReference type="GO" id="GO:0006941">
    <property type="term" value="P:striated muscle contraction"/>
    <property type="evidence" value="ECO:0000266"/>
    <property type="project" value="RGD"/>
</dbReference>
<dbReference type="CDD" id="cd07067">
    <property type="entry name" value="HP_PGM_like"/>
    <property type="match status" value="1"/>
</dbReference>
<dbReference type="FunFam" id="3.40.50.1240:FF:000007">
    <property type="entry name" value="Phosphoglycerate mutase"/>
    <property type="match status" value="1"/>
</dbReference>
<dbReference type="Gene3D" id="3.40.50.1240">
    <property type="entry name" value="Phosphoglycerate mutase-like"/>
    <property type="match status" value="1"/>
</dbReference>
<dbReference type="HAMAP" id="MF_01039">
    <property type="entry name" value="PGAM_GpmA"/>
    <property type="match status" value="1"/>
</dbReference>
<dbReference type="InterPro" id="IPR013078">
    <property type="entry name" value="His_Pase_superF_clade-1"/>
</dbReference>
<dbReference type="InterPro" id="IPR029033">
    <property type="entry name" value="His_PPase_superfam"/>
</dbReference>
<dbReference type="InterPro" id="IPR001345">
    <property type="entry name" value="PG/BPGM_mutase_AS"/>
</dbReference>
<dbReference type="InterPro" id="IPR005952">
    <property type="entry name" value="Phosphogly_mut1"/>
</dbReference>
<dbReference type="NCBIfam" id="TIGR01258">
    <property type="entry name" value="pgm_1"/>
    <property type="match status" value="1"/>
</dbReference>
<dbReference type="NCBIfam" id="NF010713">
    <property type="entry name" value="PRK14115.1"/>
    <property type="match status" value="1"/>
</dbReference>
<dbReference type="PANTHER" id="PTHR11931">
    <property type="entry name" value="PHOSPHOGLYCERATE MUTASE"/>
    <property type="match status" value="1"/>
</dbReference>
<dbReference type="Pfam" id="PF00300">
    <property type="entry name" value="His_Phos_1"/>
    <property type="match status" value="2"/>
</dbReference>
<dbReference type="PIRSF" id="PIRSF000709">
    <property type="entry name" value="6PFK_2-Ptase"/>
    <property type="match status" value="1"/>
</dbReference>
<dbReference type="SMART" id="SM00855">
    <property type="entry name" value="PGAM"/>
    <property type="match status" value="1"/>
</dbReference>
<dbReference type="SUPFAM" id="SSF53254">
    <property type="entry name" value="Phosphoglycerate mutase-like"/>
    <property type="match status" value="1"/>
</dbReference>
<dbReference type="PROSITE" id="PS00175">
    <property type="entry name" value="PG_MUTASE"/>
    <property type="match status" value="1"/>
</dbReference>
<evidence type="ECO:0000250" key="1">
    <source>
        <dbReference type="UniProtKB" id="O70250"/>
    </source>
</evidence>
<evidence type="ECO:0000250" key="2">
    <source>
        <dbReference type="UniProtKB" id="P00950"/>
    </source>
</evidence>
<evidence type="ECO:0000250" key="3">
    <source>
        <dbReference type="UniProtKB" id="P18669"/>
    </source>
</evidence>
<evidence type="ECO:0000305" key="4"/>
<evidence type="ECO:0007744" key="5">
    <source>
    </source>
</evidence>
<organism>
    <name type="scientific">Rattus norvegicus</name>
    <name type="common">Rat</name>
    <dbReference type="NCBI Taxonomy" id="10116"/>
    <lineage>
        <taxon>Eukaryota</taxon>
        <taxon>Metazoa</taxon>
        <taxon>Chordata</taxon>
        <taxon>Craniata</taxon>
        <taxon>Vertebrata</taxon>
        <taxon>Euteleostomi</taxon>
        <taxon>Mammalia</taxon>
        <taxon>Eutheria</taxon>
        <taxon>Euarchontoglires</taxon>
        <taxon>Glires</taxon>
        <taxon>Rodentia</taxon>
        <taxon>Myomorpha</taxon>
        <taxon>Muroidea</taxon>
        <taxon>Muridae</taxon>
        <taxon>Murinae</taxon>
        <taxon>Rattus</taxon>
    </lineage>
</organism>
<feature type="chain" id="PRO_0000179831" description="Phosphoglycerate mutase 2">
    <location>
        <begin position="1"/>
        <end position="253"/>
    </location>
</feature>
<feature type="active site" description="Tele-phosphohistidine intermediate" evidence="3">
    <location>
        <position position="11"/>
    </location>
</feature>
<feature type="active site" description="Proton donor/acceptor" evidence="3">
    <location>
        <position position="89"/>
    </location>
</feature>
<feature type="binding site" evidence="2">
    <location>
        <begin position="10"/>
        <end position="17"/>
    </location>
    <ligand>
        <name>substrate</name>
    </ligand>
</feature>
<feature type="binding site" evidence="2">
    <location>
        <begin position="23"/>
        <end position="24"/>
    </location>
    <ligand>
        <name>substrate</name>
    </ligand>
</feature>
<feature type="binding site" evidence="2">
    <location>
        <position position="62"/>
    </location>
    <ligand>
        <name>substrate</name>
    </ligand>
</feature>
<feature type="binding site" evidence="2">
    <location>
        <begin position="89"/>
        <end position="92"/>
    </location>
    <ligand>
        <name>substrate</name>
    </ligand>
</feature>
<feature type="binding site" evidence="2">
    <location>
        <position position="100"/>
    </location>
    <ligand>
        <name>substrate</name>
    </ligand>
</feature>
<feature type="binding site" evidence="2">
    <location>
        <begin position="116"/>
        <end position="117"/>
    </location>
    <ligand>
        <name>substrate</name>
    </ligand>
</feature>
<feature type="binding site" evidence="2">
    <location>
        <begin position="187"/>
        <end position="188"/>
    </location>
    <ligand>
        <name>substrate</name>
    </ligand>
</feature>
<feature type="site" description="Transition state stabilizer" evidence="2">
    <location>
        <position position="186"/>
    </location>
</feature>
<feature type="modified residue" description="Phosphothreonine" evidence="5">
    <location>
        <position position="3"/>
    </location>
</feature>
<feature type="modified residue" description="Phosphoserine" evidence="5">
    <location>
        <position position="14"/>
    </location>
</feature>
<feature type="modified residue" description="Phosphoserine" evidence="5">
    <location>
        <position position="15"/>
    </location>
</feature>
<feature type="modified residue" description="Phosphoserine" evidence="5">
    <location>
        <position position="118"/>
    </location>
</feature>
<feature type="modified residue" description="Phosphothreonine" evidence="5">
    <location>
        <position position="121"/>
    </location>
</feature>
<feature type="modified residue" description="Phosphotyrosine" evidence="5">
    <location>
        <position position="132"/>
    </location>
</feature>
<feature type="modified residue" description="Phosphotyrosine" evidence="5">
    <location>
        <position position="133"/>
    </location>
</feature>
<feature type="modified residue" description="Phosphoserine" evidence="5">
    <location>
        <position position="135"/>
    </location>
</feature>
<feature type="modified residue" description="Phosphothreonine" evidence="5">
    <location>
        <position position="152"/>
    </location>
</feature>
<gene>
    <name type="primary">Pgam2</name>
</gene>
<comment type="function">
    <text>Interconversion of 3- and 2-phosphoglycerate with 2,3-bisphosphoglycerate as the primer of the reaction. Can also catalyze the reaction of EC 5.4.2.4 (synthase), but with a reduced activity.</text>
</comment>
<comment type="catalytic activity">
    <reaction evidence="3">
        <text>(2R)-2-phosphoglycerate = (2R)-3-phosphoglycerate</text>
        <dbReference type="Rhea" id="RHEA:15901"/>
        <dbReference type="ChEBI" id="CHEBI:58272"/>
        <dbReference type="ChEBI" id="CHEBI:58289"/>
        <dbReference type="EC" id="5.4.2.11"/>
    </reaction>
</comment>
<comment type="catalytic activity">
    <reaction evidence="3">
        <text>(2R)-3-phospho-glyceroyl phosphate = (2R)-2,3-bisphosphoglycerate + H(+)</text>
        <dbReference type="Rhea" id="RHEA:17765"/>
        <dbReference type="ChEBI" id="CHEBI:15378"/>
        <dbReference type="ChEBI" id="CHEBI:57604"/>
        <dbReference type="ChEBI" id="CHEBI:58248"/>
        <dbReference type="EC" id="5.4.2.4"/>
    </reaction>
</comment>
<comment type="subunit">
    <text evidence="1 3">Homodimer. Interacts with ENO1.</text>
</comment>
<comment type="similarity">
    <text evidence="4">Belongs to the phosphoglycerate mutase family. BPG-dependent PGAM subfamily.</text>
</comment>
<accession>P16290</accession>
<sequence>MATHRLVMVRHGESSWNQENRFCGWFDAELSEKGAEEAKRGATAIKDAKIEFDICYTSVLKRAIRTLWTILDVTDQMWVPVVRTWRLNERHYGGLTGLNKAETAAKHGEEQVKIWRRSFDTPPPPMDEKHNYYASISKDRRYAGLKPEELPTCESLKDTIARALPFWNEEIAPKIKAGKRVLIAAHGNSLRGIVKHLEGMSDQAIMELNLPTGIPIVYELNQELKPTKPMRFLGDEETVRKAMEAVAAQGKAK</sequence>
<proteinExistence type="evidence at protein level"/>
<name>PGAM2_RAT</name>
<reference key="1">
    <citation type="journal article" date="1989" name="Biochem. Biophys. Res. Commun.">
        <title>Sequence of rat skeletal muscle phosphoglycerate mutase cDNA.</title>
        <authorList>
            <person name="Castella-Escola J."/>
            <person name="Montoliu L."/>
            <person name="Pons G."/>
            <person name="Puigdomenech P."/>
            <person name="Cohen-Solal M."/>
            <person name="Carreras J."/>
            <person name="Rigau J."/>
            <person name="Climent F."/>
        </authorList>
    </citation>
    <scope>NUCLEOTIDE SEQUENCE [MRNA]</scope>
    <source>
        <tissue>Skeletal muscle</tissue>
    </source>
</reference>
<reference key="2">
    <citation type="journal article" date="1994" name="Gene">
        <title>The gene encoding rat phosphoglycerate mutase subunit M: cloning and promoter analysis in skeletal muscle cells.</title>
        <authorList>
            <person name="Ruiz-Lozano P."/>
            <person name="de Lecea L."/>
            <person name="Buesa C."/>
            <person name="Perez de la Osa P."/>
            <person name="Lepage D."/>
            <person name="Gualberto A."/>
            <person name="Walsh K."/>
            <person name="Pons G."/>
        </authorList>
    </citation>
    <scope>NUCLEOTIDE SEQUENCE [GENOMIC DNA]</scope>
</reference>
<reference key="3">
    <citation type="journal article" date="2012" name="Nat. Commun.">
        <title>Quantitative maps of protein phosphorylation sites across 14 different rat organs and tissues.</title>
        <authorList>
            <person name="Lundby A."/>
            <person name="Secher A."/>
            <person name="Lage K."/>
            <person name="Nordsborg N.B."/>
            <person name="Dmytriyev A."/>
            <person name="Lundby C."/>
            <person name="Olsen J.V."/>
        </authorList>
    </citation>
    <scope>PHOSPHORYLATION [LARGE SCALE ANALYSIS] AT THR-3; SER-14; SER-15; SER-118; THR-121; TYR-132; TYR-133; SER-135 AND THR-152</scope>
    <scope>IDENTIFICATION BY MASS SPECTROMETRY [LARGE SCALE ANALYSIS]</scope>
</reference>
<protein>
    <recommendedName>
        <fullName>Phosphoglycerate mutase 2</fullName>
        <ecNumber evidence="3">5.4.2.11</ecNumber>
        <ecNumber evidence="3">5.4.2.4</ecNumber>
    </recommendedName>
    <alternativeName>
        <fullName>BPG-dependent PGAM 2</fullName>
    </alternativeName>
    <alternativeName>
        <fullName>Muscle-specific phosphoglycerate mutase</fullName>
    </alternativeName>
    <alternativeName>
        <fullName>Phosphoglycerate mutase isozyme M</fullName>
        <shortName>PGAM-M</shortName>
    </alternativeName>
</protein>
<keyword id="KW-0324">Glycolysis</keyword>
<keyword id="KW-0378">Hydrolase</keyword>
<keyword id="KW-0413">Isomerase</keyword>
<keyword id="KW-0597">Phosphoprotein</keyword>
<keyword id="KW-1185">Reference proteome</keyword>